<comment type="similarity">
    <text evidence="1">Belongs to the UPF0352 family.</text>
</comment>
<proteinExistence type="inferred from homology"/>
<dbReference type="EMBL" id="CP000243">
    <property type="protein sequence ID" value="ABE07933.1"/>
    <property type="molecule type" value="Genomic_DNA"/>
</dbReference>
<dbReference type="RefSeq" id="WP_001135664.1">
    <property type="nucleotide sequence ID" value="NZ_CP064825.1"/>
</dbReference>
<dbReference type="SMR" id="Q1R9N1"/>
<dbReference type="KEGG" id="eci:UTI89_C2465"/>
<dbReference type="HOGENOM" id="CLU_175457_0_0_6"/>
<dbReference type="Proteomes" id="UP000001952">
    <property type="component" value="Chromosome"/>
</dbReference>
<dbReference type="FunFam" id="1.10.3390.10:FF:000001">
    <property type="entry name" value="UPF0352 protein YejL"/>
    <property type="match status" value="1"/>
</dbReference>
<dbReference type="Gene3D" id="1.10.3390.10">
    <property type="entry name" value="YejL-like"/>
    <property type="match status" value="1"/>
</dbReference>
<dbReference type="HAMAP" id="MF_00816">
    <property type="entry name" value="UPF0352"/>
    <property type="match status" value="1"/>
</dbReference>
<dbReference type="InterPro" id="IPR009857">
    <property type="entry name" value="UPF0352"/>
</dbReference>
<dbReference type="InterPro" id="IPR023202">
    <property type="entry name" value="YejL_sf"/>
</dbReference>
<dbReference type="NCBIfam" id="NF010242">
    <property type="entry name" value="PRK13689.1"/>
    <property type="match status" value="1"/>
</dbReference>
<dbReference type="Pfam" id="PF07208">
    <property type="entry name" value="DUF1414"/>
    <property type="match status" value="1"/>
</dbReference>
<dbReference type="PIRSF" id="PIRSF006188">
    <property type="entry name" value="UCP006188"/>
    <property type="match status" value="1"/>
</dbReference>
<dbReference type="SUPFAM" id="SSF158651">
    <property type="entry name" value="YejL-like"/>
    <property type="match status" value="1"/>
</dbReference>
<reference key="1">
    <citation type="journal article" date="2006" name="Proc. Natl. Acad. Sci. U.S.A.">
        <title>Identification of genes subject to positive selection in uropathogenic strains of Escherichia coli: a comparative genomics approach.</title>
        <authorList>
            <person name="Chen S.L."/>
            <person name="Hung C.-S."/>
            <person name="Xu J."/>
            <person name="Reigstad C.S."/>
            <person name="Magrini V."/>
            <person name="Sabo A."/>
            <person name="Blasiar D."/>
            <person name="Bieri T."/>
            <person name="Meyer R.R."/>
            <person name="Ozersky P."/>
            <person name="Armstrong J.R."/>
            <person name="Fulton R.S."/>
            <person name="Latreille J.P."/>
            <person name="Spieth J."/>
            <person name="Hooton T.M."/>
            <person name="Mardis E.R."/>
            <person name="Hultgren S.J."/>
            <person name="Gordon J.I."/>
        </authorList>
    </citation>
    <scope>NUCLEOTIDE SEQUENCE [LARGE SCALE GENOMIC DNA]</scope>
    <source>
        <strain>UTI89 / UPEC</strain>
    </source>
</reference>
<gene>
    <name evidence="1" type="primary">yejL</name>
    <name type="ordered locus">UTI89_C2465</name>
</gene>
<protein>
    <recommendedName>
        <fullName evidence="1">UPF0352 protein YejL</fullName>
    </recommendedName>
</protein>
<feature type="chain" id="PRO_1000062303" description="UPF0352 protein YejL">
    <location>
        <begin position="1"/>
        <end position="75"/>
    </location>
</feature>
<name>YEJL_ECOUT</name>
<evidence type="ECO:0000255" key="1">
    <source>
        <dbReference type="HAMAP-Rule" id="MF_00816"/>
    </source>
</evidence>
<sequence length="75" mass="8302">MPQISRYSDEQVEQLLAELLNILEKHKAPTDLSLMVLGNMVTNLINTSIAPAQRQAIANSFARALQSSINEDKAH</sequence>
<accession>Q1R9N1</accession>
<organism>
    <name type="scientific">Escherichia coli (strain UTI89 / UPEC)</name>
    <dbReference type="NCBI Taxonomy" id="364106"/>
    <lineage>
        <taxon>Bacteria</taxon>
        <taxon>Pseudomonadati</taxon>
        <taxon>Pseudomonadota</taxon>
        <taxon>Gammaproteobacteria</taxon>
        <taxon>Enterobacterales</taxon>
        <taxon>Enterobacteriaceae</taxon>
        <taxon>Escherichia</taxon>
    </lineage>
</organism>